<evidence type="ECO:0000255" key="1">
    <source>
        <dbReference type="HAMAP-Rule" id="MF_00707"/>
    </source>
</evidence>
<sequence>MMDNKDYKKFYLIREDVLPESVVKTLKIKDALKSDPTLSIYDAVKQFDLSRSAFYKYRETIFPVDDKMLDHREFTLILYVTDIVGMLARVLDVISKLELSVLTIHQSIPMEEKATITLSLNAKSKETSVEDVIGALRNLDYVSKVELISMSM</sequence>
<proteinExistence type="inferred from homology"/>
<name>Y1733_STAA2</name>
<dbReference type="EMBL" id="CP000736">
    <property type="protein sequence ID" value="ABR52579.1"/>
    <property type="molecule type" value="Genomic_DNA"/>
</dbReference>
<dbReference type="KEGG" id="sah:SaurJH1_1733"/>
<dbReference type="HOGENOM" id="CLU_128147_0_0_9"/>
<dbReference type="Gene3D" id="3.30.70.260">
    <property type="match status" value="1"/>
</dbReference>
<dbReference type="HAMAP" id="MF_00707">
    <property type="entry name" value="UPF0735"/>
    <property type="match status" value="1"/>
</dbReference>
<dbReference type="InterPro" id="IPR045865">
    <property type="entry name" value="ACT-like_dom_sf"/>
</dbReference>
<dbReference type="InterPro" id="IPR002912">
    <property type="entry name" value="ACT_dom"/>
</dbReference>
<dbReference type="InterPro" id="IPR008310">
    <property type="entry name" value="UPF0735_ACT_dom-cont"/>
</dbReference>
<dbReference type="NCBIfam" id="NF003361">
    <property type="entry name" value="PRK04435.1"/>
    <property type="match status" value="1"/>
</dbReference>
<dbReference type="PIRSF" id="PIRSF025624">
    <property type="entry name" value="ACT_PheB"/>
    <property type="match status" value="1"/>
</dbReference>
<dbReference type="SUPFAM" id="SSF55021">
    <property type="entry name" value="ACT-like"/>
    <property type="match status" value="1"/>
</dbReference>
<dbReference type="PROSITE" id="PS51671">
    <property type="entry name" value="ACT"/>
    <property type="match status" value="1"/>
</dbReference>
<reference key="1">
    <citation type="submission" date="2007-06" db="EMBL/GenBank/DDBJ databases">
        <title>Complete sequence of chromosome of Staphylococcus aureus subsp. aureus JH1.</title>
        <authorList>
            <consortium name="US DOE Joint Genome Institute"/>
            <person name="Copeland A."/>
            <person name="Lucas S."/>
            <person name="Lapidus A."/>
            <person name="Barry K."/>
            <person name="Detter J.C."/>
            <person name="Glavina del Rio T."/>
            <person name="Hammon N."/>
            <person name="Israni S."/>
            <person name="Dalin E."/>
            <person name="Tice H."/>
            <person name="Pitluck S."/>
            <person name="Chain P."/>
            <person name="Malfatti S."/>
            <person name="Shin M."/>
            <person name="Vergez L."/>
            <person name="Schmutz J."/>
            <person name="Larimer F."/>
            <person name="Land M."/>
            <person name="Hauser L."/>
            <person name="Kyrpides N."/>
            <person name="Ivanova N."/>
            <person name="Tomasz A."/>
            <person name="Richardson P."/>
        </authorList>
    </citation>
    <scope>NUCLEOTIDE SEQUENCE [LARGE SCALE GENOMIC DNA]</scope>
    <source>
        <strain>JH1</strain>
    </source>
</reference>
<organism>
    <name type="scientific">Staphylococcus aureus (strain JH1)</name>
    <dbReference type="NCBI Taxonomy" id="359787"/>
    <lineage>
        <taxon>Bacteria</taxon>
        <taxon>Bacillati</taxon>
        <taxon>Bacillota</taxon>
        <taxon>Bacilli</taxon>
        <taxon>Bacillales</taxon>
        <taxon>Staphylococcaceae</taxon>
        <taxon>Staphylococcus</taxon>
    </lineage>
</organism>
<gene>
    <name type="ordered locus">SaurJH1_1733</name>
</gene>
<comment type="similarity">
    <text evidence="1">Belongs to the UPF0735 family.</text>
</comment>
<accession>A6U2B1</accession>
<feature type="chain" id="PRO_1000083195" description="UPF0735 ACT domain-containing protein SaurJH1_1733">
    <location>
        <begin position="1"/>
        <end position="152"/>
    </location>
</feature>
<feature type="domain" description="ACT" evidence="1">
    <location>
        <begin position="75"/>
        <end position="150"/>
    </location>
</feature>
<protein>
    <recommendedName>
        <fullName evidence="1">UPF0735 ACT domain-containing protein SaurJH1_1733</fullName>
    </recommendedName>
</protein>